<evidence type="ECO:0000250" key="1"/>
<evidence type="ECO:0000305" key="2"/>
<organism>
    <name type="scientific">Rattus norvegicus</name>
    <name type="common">Rat</name>
    <dbReference type="NCBI Taxonomy" id="10116"/>
    <lineage>
        <taxon>Eukaryota</taxon>
        <taxon>Metazoa</taxon>
        <taxon>Chordata</taxon>
        <taxon>Craniata</taxon>
        <taxon>Vertebrata</taxon>
        <taxon>Euteleostomi</taxon>
        <taxon>Mammalia</taxon>
        <taxon>Eutheria</taxon>
        <taxon>Euarchontoglires</taxon>
        <taxon>Glires</taxon>
        <taxon>Rodentia</taxon>
        <taxon>Myomorpha</taxon>
        <taxon>Muroidea</taxon>
        <taxon>Muridae</taxon>
        <taxon>Murinae</taxon>
        <taxon>Rattus</taxon>
    </lineage>
</organism>
<comment type="function">
    <text evidence="1">Methylates the carboxyl group of the C-terminal leucine residue of protein phosphatase 2A catalytic subunits to form alpha-leucine ester residues.</text>
</comment>
<comment type="catalytic activity">
    <reaction>
        <text>[phosphatase 2A protein]-C-terminal L-leucine + S-adenosyl-L-methionine = [phosphatase 2A protein]-C-terminal L-leucine methyl ester + S-adenosyl-L-homocysteine</text>
        <dbReference type="Rhea" id="RHEA:48544"/>
        <dbReference type="Rhea" id="RHEA-COMP:12134"/>
        <dbReference type="Rhea" id="RHEA-COMP:12135"/>
        <dbReference type="ChEBI" id="CHEBI:57856"/>
        <dbReference type="ChEBI" id="CHEBI:59789"/>
        <dbReference type="ChEBI" id="CHEBI:90516"/>
        <dbReference type="ChEBI" id="CHEBI:90517"/>
        <dbReference type="EC" id="2.1.1.233"/>
    </reaction>
</comment>
<comment type="similarity">
    <text evidence="2">Belongs to the methyltransferase superfamily. LCMT family.</text>
</comment>
<keyword id="KW-0489">Methyltransferase</keyword>
<keyword id="KW-1185">Reference proteome</keyword>
<keyword id="KW-0949">S-adenosyl-L-methionine</keyword>
<keyword id="KW-0808">Transferase</keyword>
<reference key="1">
    <citation type="journal article" date="2004" name="Genome Res.">
        <title>The status, quality, and expansion of the NIH full-length cDNA project: the Mammalian Gene Collection (MGC).</title>
        <authorList>
            <consortium name="The MGC Project Team"/>
        </authorList>
    </citation>
    <scope>NUCLEOTIDE SEQUENCE [LARGE SCALE MRNA]</scope>
    <source>
        <tissue>Pituitary</tissue>
    </source>
</reference>
<proteinExistence type="evidence at transcript level"/>
<gene>
    <name type="primary">Lcmt1</name>
</gene>
<protein>
    <recommendedName>
        <fullName>Leucine carboxyl methyltransferase 1</fullName>
        <ecNumber>2.1.1.233</ecNumber>
    </recommendedName>
    <alternativeName>
        <fullName>[Phosphatase 2A protein]-leucine-carboxy methyltransferase 1</fullName>
    </alternativeName>
</protein>
<name>LCMT1_RAT</name>
<dbReference type="EC" id="2.1.1.233"/>
<dbReference type="EMBL" id="BC063186">
    <property type="protein sequence ID" value="AAH63186.1"/>
    <property type="molecule type" value="mRNA"/>
</dbReference>
<dbReference type="RefSeq" id="NP_955437.1">
    <property type="nucleotide sequence ID" value="NM_199405.2"/>
</dbReference>
<dbReference type="SMR" id="Q6P4Z6"/>
<dbReference type="FunCoup" id="Q6P4Z6">
    <property type="interactions" value="3228"/>
</dbReference>
<dbReference type="STRING" id="10116.ENSRNOP00000019640"/>
<dbReference type="PhosphoSitePlus" id="Q6P4Z6"/>
<dbReference type="jPOST" id="Q6P4Z6"/>
<dbReference type="PaxDb" id="10116-ENSRNOP00000019640"/>
<dbReference type="GeneID" id="361643"/>
<dbReference type="KEGG" id="rno:361643"/>
<dbReference type="UCSC" id="RGD:735118">
    <property type="organism name" value="rat"/>
</dbReference>
<dbReference type="AGR" id="RGD:735118"/>
<dbReference type="CTD" id="51451"/>
<dbReference type="RGD" id="735118">
    <property type="gene designation" value="Lcmt1"/>
</dbReference>
<dbReference type="eggNOG" id="KOG2918">
    <property type="taxonomic scope" value="Eukaryota"/>
</dbReference>
<dbReference type="InParanoid" id="Q6P4Z6"/>
<dbReference type="PhylomeDB" id="Q6P4Z6"/>
<dbReference type="BRENDA" id="2.1.1.233">
    <property type="organism ID" value="5301"/>
</dbReference>
<dbReference type="Reactome" id="R-RNO-69273">
    <property type="pathway name" value="Cyclin A/B1/B2 associated events during G2/M transition"/>
</dbReference>
<dbReference type="PRO" id="PR:Q6P4Z6"/>
<dbReference type="Proteomes" id="UP000002494">
    <property type="component" value="Unplaced"/>
</dbReference>
<dbReference type="GO" id="GO:0005829">
    <property type="term" value="C:cytosol"/>
    <property type="evidence" value="ECO:0000266"/>
    <property type="project" value="RGD"/>
</dbReference>
<dbReference type="GO" id="GO:0003880">
    <property type="term" value="F:protein C-terminal carboxyl O-methyltransferase activity"/>
    <property type="evidence" value="ECO:0000266"/>
    <property type="project" value="RGD"/>
</dbReference>
<dbReference type="GO" id="GO:0018423">
    <property type="term" value="F:protein C-terminal leucine carboxyl O-methyltransferase activity"/>
    <property type="evidence" value="ECO:0000318"/>
    <property type="project" value="GO_Central"/>
</dbReference>
<dbReference type="GO" id="GO:0008276">
    <property type="term" value="F:protein methyltransferase activity"/>
    <property type="evidence" value="ECO:0000266"/>
    <property type="project" value="RGD"/>
</dbReference>
<dbReference type="GO" id="GO:0032259">
    <property type="term" value="P:methylation"/>
    <property type="evidence" value="ECO:0007669"/>
    <property type="project" value="UniProtKB-KW"/>
</dbReference>
<dbReference type="GO" id="GO:0031333">
    <property type="term" value="P:negative regulation of protein-containing complex assembly"/>
    <property type="evidence" value="ECO:0000266"/>
    <property type="project" value="RGD"/>
</dbReference>
<dbReference type="GO" id="GO:0042981">
    <property type="term" value="P:regulation of apoptotic process"/>
    <property type="evidence" value="ECO:0000266"/>
    <property type="project" value="RGD"/>
</dbReference>
<dbReference type="GO" id="GO:0010906">
    <property type="term" value="P:regulation of glucose metabolic process"/>
    <property type="evidence" value="ECO:0000266"/>
    <property type="project" value="RGD"/>
</dbReference>
<dbReference type="GO" id="GO:0090266">
    <property type="term" value="P:regulation of mitotic cell cycle spindle assembly checkpoint"/>
    <property type="evidence" value="ECO:0000266"/>
    <property type="project" value="RGD"/>
</dbReference>
<dbReference type="FunFam" id="3.40.50.150:FF:000092">
    <property type="entry name" value="Leucine carboxyl methyltransferase 1"/>
    <property type="match status" value="1"/>
</dbReference>
<dbReference type="Gene3D" id="3.40.50.150">
    <property type="entry name" value="Vaccinia Virus protein VP39"/>
    <property type="match status" value="1"/>
</dbReference>
<dbReference type="InterPro" id="IPR016651">
    <property type="entry name" value="LCMT1"/>
</dbReference>
<dbReference type="InterPro" id="IPR007213">
    <property type="entry name" value="Ppm1/Ppm2/Tcmp"/>
</dbReference>
<dbReference type="InterPro" id="IPR029063">
    <property type="entry name" value="SAM-dependent_MTases_sf"/>
</dbReference>
<dbReference type="PANTHER" id="PTHR13600">
    <property type="entry name" value="LEUCINE CARBOXYL METHYLTRANSFERASE"/>
    <property type="match status" value="1"/>
</dbReference>
<dbReference type="PANTHER" id="PTHR13600:SF33">
    <property type="entry name" value="LEUCINE CARBOXYL METHYLTRANSFERASE 1"/>
    <property type="match status" value="1"/>
</dbReference>
<dbReference type="Pfam" id="PF04072">
    <property type="entry name" value="LCM"/>
    <property type="match status" value="1"/>
</dbReference>
<dbReference type="PIRSF" id="PIRSF016305">
    <property type="entry name" value="LCM_mtfrase"/>
    <property type="match status" value="1"/>
</dbReference>
<dbReference type="SUPFAM" id="SSF53335">
    <property type="entry name" value="S-adenosyl-L-methionine-dependent methyltransferases"/>
    <property type="match status" value="1"/>
</dbReference>
<sequence>MATGSRESSFSSCASSCDFDDEGVRGTCEDASLCKRFAVSIGHWHDPYIEHLVRQSKERKAPEINRGYFARVHGVSQLIKAFLRKTECRCQILNLGAGMDTTFWKLKDEGLLPNKYFEVDFPMIVTRKLHTIKNKPLLFRPIMELHPEDTLQIDSHMLDSKRYAIIGADLRDLSELEEKLKKCNMNTQLPTLLITECVLVYMTPEQSANLLKWAARSFETAMFINYEQVNMDDRFGQIMIENLRRRQCDLAGVETCKSLESQKERLLLNGWETASAVNMMELYSGLPRAEVNRIESLEFLDEMELLEQLMRHYCLCWATRGGQELGLKEITY</sequence>
<feature type="chain" id="PRO_0000226151" description="Leucine carboxyl methyltransferase 1">
    <location>
        <begin position="1"/>
        <end position="332"/>
    </location>
</feature>
<feature type="binding site" evidence="1">
    <location>
        <position position="71"/>
    </location>
    <ligand>
        <name>S-adenosyl-L-methionine</name>
        <dbReference type="ChEBI" id="CHEBI:59789"/>
    </ligand>
</feature>
<feature type="binding site" evidence="1">
    <location>
        <position position="96"/>
    </location>
    <ligand>
        <name>S-adenosyl-L-methionine</name>
        <dbReference type="ChEBI" id="CHEBI:59789"/>
    </ligand>
</feature>
<feature type="binding site" evidence="1">
    <location>
        <position position="120"/>
    </location>
    <ligand>
        <name>S-adenosyl-L-methionine</name>
        <dbReference type="ChEBI" id="CHEBI:59789"/>
    </ligand>
</feature>
<feature type="binding site" evidence="1">
    <location>
        <begin position="169"/>
        <end position="170"/>
    </location>
    <ligand>
        <name>S-adenosyl-L-methionine</name>
        <dbReference type="ChEBI" id="CHEBI:59789"/>
    </ligand>
</feature>
<feature type="binding site" evidence="1">
    <location>
        <position position="196"/>
    </location>
    <ligand>
        <name>S-adenosyl-L-methionine</name>
        <dbReference type="ChEBI" id="CHEBI:59789"/>
    </ligand>
</feature>
<accession>Q6P4Z6</accession>